<organism>
    <name type="scientific">Rickettsia rickettsii (strain Sheila Smith)</name>
    <dbReference type="NCBI Taxonomy" id="392021"/>
    <lineage>
        <taxon>Bacteria</taxon>
        <taxon>Pseudomonadati</taxon>
        <taxon>Pseudomonadota</taxon>
        <taxon>Alphaproteobacteria</taxon>
        <taxon>Rickettsiales</taxon>
        <taxon>Rickettsiaceae</taxon>
        <taxon>Rickettsieae</taxon>
        <taxon>Rickettsia</taxon>
        <taxon>spotted fever group</taxon>
    </lineage>
</organism>
<comment type="function">
    <text evidence="1">Accelerates the degradation of transcripts by removing pyrophosphate from the 5'-end of triphosphorylated RNA, leading to a more labile monophosphorylated state that can stimulate subsequent ribonuclease cleavage.</text>
</comment>
<comment type="cofactor">
    <cofactor evidence="1">
        <name>a divalent metal cation</name>
        <dbReference type="ChEBI" id="CHEBI:60240"/>
    </cofactor>
</comment>
<comment type="similarity">
    <text evidence="1">Belongs to the Nudix hydrolase family. RppH subfamily.</text>
</comment>
<evidence type="ECO:0000255" key="1">
    <source>
        <dbReference type="HAMAP-Rule" id="MF_00298"/>
    </source>
</evidence>
<dbReference type="EC" id="3.6.1.-" evidence="1"/>
<dbReference type="EMBL" id="CP000848">
    <property type="protein sequence ID" value="ABV75932.1"/>
    <property type="molecule type" value="Genomic_DNA"/>
</dbReference>
<dbReference type="RefSeq" id="WP_012150535.1">
    <property type="nucleotide sequence ID" value="NZ_CP121767.1"/>
</dbReference>
<dbReference type="SMR" id="A8GRA7"/>
<dbReference type="GeneID" id="79937097"/>
<dbReference type="KEGG" id="rri:A1G_01830"/>
<dbReference type="HOGENOM" id="CLU_087195_3_0_5"/>
<dbReference type="Proteomes" id="UP000006832">
    <property type="component" value="Chromosome"/>
</dbReference>
<dbReference type="GO" id="GO:0005737">
    <property type="term" value="C:cytoplasm"/>
    <property type="evidence" value="ECO:0007669"/>
    <property type="project" value="TreeGrafter"/>
</dbReference>
<dbReference type="GO" id="GO:0034353">
    <property type="term" value="F:mRNA 5'-diphosphatase activity"/>
    <property type="evidence" value="ECO:0007669"/>
    <property type="project" value="TreeGrafter"/>
</dbReference>
<dbReference type="GO" id="GO:0006402">
    <property type="term" value="P:mRNA catabolic process"/>
    <property type="evidence" value="ECO:0007669"/>
    <property type="project" value="TreeGrafter"/>
</dbReference>
<dbReference type="CDD" id="cd03671">
    <property type="entry name" value="NUDIX_Ap4A_hydrolase_plant_like"/>
    <property type="match status" value="1"/>
</dbReference>
<dbReference type="Gene3D" id="3.90.79.10">
    <property type="entry name" value="Nucleoside Triphosphate Pyrophosphohydrolase"/>
    <property type="match status" value="1"/>
</dbReference>
<dbReference type="HAMAP" id="MF_00298">
    <property type="entry name" value="Nudix_RppH"/>
    <property type="match status" value="1"/>
</dbReference>
<dbReference type="InterPro" id="IPR015797">
    <property type="entry name" value="NUDIX_hydrolase-like_dom_sf"/>
</dbReference>
<dbReference type="InterPro" id="IPR020084">
    <property type="entry name" value="NUDIX_hydrolase_CS"/>
</dbReference>
<dbReference type="InterPro" id="IPR000086">
    <property type="entry name" value="NUDIX_hydrolase_dom"/>
</dbReference>
<dbReference type="InterPro" id="IPR022927">
    <property type="entry name" value="RppH"/>
</dbReference>
<dbReference type="NCBIfam" id="NF001936">
    <property type="entry name" value="PRK00714.1-3"/>
    <property type="match status" value="1"/>
</dbReference>
<dbReference type="NCBIfam" id="NF001938">
    <property type="entry name" value="PRK00714.1-5"/>
    <property type="match status" value="1"/>
</dbReference>
<dbReference type="PANTHER" id="PTHR23114">
    <property type="entry name" value="M7GPPPN-MRNA HYDROLASE"/>
    <property type="match status" value="1"/>
</dbReference>
<dbReference type="PANTHER" id="PTHR23114:SF17">
    <property type="entry name" value="M7GPPPN-MRNA HYDROLASE"/>
    <property type="match status" value="1"/>
</dbReference>
<dbReference type="Pfam" id="PF00293">
    <property type="entry name" value="NUDIX"/>
    <property type="match status" value="1"/>
</dbReference>
<dbReference type="SUPFAM" id="SSF55811">
    <property type="entry name" value="Nudix"/>
    <property type="match status" value="1"/>
</dbReference>
<dbReference type="PROSITE" id="PS51462">
    <property type="entry name" value="NUDIX"/>
    <property type="match status" value="1"/>
</dbReference>
<dbReference type="PROSITE" id="PS00893">
    <property type="entry name" value="NUDIX_BOX"/>
    <property type="match status" value="1"/>
</dbReference>
<gene>
    <name evidence="1" type="primary">rppH</name>
    <name evidence="1" type="synonym">nudH</name>
    <name type="ordered locus">A1G_01830</name>
</gene>
<reference key="1">
    <citation type="submission" date="2007-09" db="EMBL/GenBank/DDBJ databases">
        <title>Complete genome sequence of Rickettsia rickettsii.</title>
        <authorList>
            <person name="Madan A."/>
            <person name="Fahey J."/>
            <person name="Helton E."/>
            <person name="Ketteman M."/>
            <person name="Madan A."/>
            <person name="Rodrigues S."/>
            <person name="Sanchez A."/>
            <person name="Dasch G."/>
            <person name="Eremeeva M."/>
        </authorList>
    </citation>
    <scope>NUCLEOTIDE SEQUENCE [LARGE SCALE GENOMIC DNA]</scope>
    <source>
        <strain>Sheila Smith</strain>
    </source>
</reference>
<protein>
    <recommendedName>
        <fullName evidence="1">RNA pyrophosphohydrolase</fullName>
        <ecNumber evidence="1">3.6.1.-</ecNumber>
    </recommendedName>
    <alternativeName>
        <fullName evidence="1">(Di)nucleoside polyphosphate hydrolase</fullName>
    </alternativeName>
</protein>
<sequence>MSNSSKKHLDLPYRPGVGMMILNADNHIFVGKRIDTKISAWQMPQGGIVPGETPSIAAMREMLEEIGSDKGYIIAESKCWYSYDVPSFLIPKLWNGNFRGQKQRWFLIRFTGNNEDININTSNPEFDQWRWASLDELLSIIIPFKRKLYQAVVKEFESLIQ</sequence>
<keyword id="KW-0378">Hydrolase</keyword>
<feature type="chain" id="PRO_1000021989" description="RNA pyrophosphohydrolase">
    <location>
        <begin position="1"/>
        <end position="161"/>
    </location>
</feature>
<feature type="domain" description="Nudix hydrolase" evidence="1">
    <location>
        <begin position="12"/>
        <end position="154"/>
    </location>
</feature>
<feature type="short sequence motif" description="Nudix box">
    <location>
        <begin position="46"/>
        <end position="67"/>
    </location>
</feature>
<proteinExistence type="inferred from homology"/>
<accession>A8GRA7</accession>
<name>RPPH_RICRS</name>